<gene>
    <name type="ordered locus">MG225</name>
</gene>
<organism>
    <name type="scientific">Mycoplasma genitalium (strain ATCC 33530 / DSM 19775 / NCTC 10195 / G37)</name>
    <name type="common">Mycoplasmoides genitalium</name>
    <dbReference type="NCBI Taxonomy" id="243273"/>
    <lineage>
        <taxon>Bacteria</taxon>
        <taxon>Bacillati</taxon>
        <taxon>Mycoplasmatota</taxon>
        <taxon>Mycoplasmoidales</taxon>
        <taxon>Mycoplasmoidaceae</taxon>
        <taxon>Mycoplasmoides</taxon>
    </lineage>
</organism>
<proteinExistence type="predicted"/>
<comment type="subcellular location">
    <subcellularLocation>
        <location evidence="2">Cell membrane</location>
        <topology evidence="2">Multi-pass membrane protein</topology>
    </subcellularLocation>
</comment>
<comment type="similarity">
    <text evidence="2">To M.genitalium MG226.</text>
</comment>
<reference key="1">
    <citation type="journal article" date="1995" name="Science">
        <title>The minimal gene complement of Mycoplasma genitalium.</title>
        <authorList>
            <person name="Fraser C.M."/>
            <person name="Gocayne J.D."/>
            <person name="White O."/>
            <person name="Adams M.D."/>
            <person name="Clayton R.A."/>
            <person name="Fleischmann R.D."/>
            <person name="Bult C.J."/>
            <person name="Kerlavage A.R."/>
            <person name="Sutton G.G."/>
            <person name="Kelley J.M."/>
            <person name="Fritchman J.L."/>
            <person name="Weidman J.F."/>
            <person name="Small K.V."/>
            <person name="Sandusky M."/>
            <person name="Fuhrmann J.L."/>
            <person name="Nguyen D.T."/>
            <person name="Utterback T.R."/>
            <person name="Saudek D.M."/>
            <person name="Phillips C.A."/>
            <person name="Merrick J.M."/>
            <person name="Tomb J.-F."/>
            <person name="Dougherty B.A."/>
            <person name="Bott K.F."/>
            <person name="Hu P.-C."/>
            <person name="Lucier T.S."/>
            <person name="Peterson S.N."/>
            <person name="Smith H.O."/>
            <person name="Hutchison C.A. III"/>
            <person name="Venter J.C."/>
        </authorList>
    </citation>
    <scope>NUCLEOTIDE SEQUENCE [LARGE SCALE GENOMIC DNA]</scope>
    <source>
        <strain>ATCC 33530 / DSM 19775 / NCTC 10195 / G37</strain>
    </source>
</reference>
<reference key="2">
    <citation type="journal article" date="1993" name="J. Bacteriol.">
        <title>A survey of the Mycoplasma genitalium genome by using random sequencing.</title>
        <authorList>
            <person name="Peterson S.N."/>
            <person name="Hu P.-C."/>
            <person name="Bott K.F."/>
            <person name="Hutchison C.A. III"/>
        </authorList>
    </citation>
    <scope>NUCLEOTIDE SEQUENCE [GENOMIC DNA] OF 225-286</scope>
    <source>
        <strain>ATCC 33530 / DSM 19775 / NCTC 10195 / G37</strain>
    </source>
</reference>
<accession>P47467</accession>
<accession>Q49208</accession>
<evidence type="ECO:0000255" key="1"/>
<evidence type="ECO:0000305" key="2"/>
<feature type="chain" id="PRO_0000210467" description="Uncharacterized protein MG225">
    <location>
        <begin position="1"/>
        <end position="489"/>
    </location>
</feature>
<feature type="transmembrane region" description="Helical" evidence="1">
    <location>
        <begin position="14"/>
        <end position="34"/>
    </location>
</feature>
<feature type="transmembrane region" description="Helical" evidence="1">
    <location>
        <begin position="36"/>
        <end position="56"/>
    </location>
</feature>
<feature type="transmembrane region" description="Helical" evidence="1">
    <location>
        <begin position="100"/>
        <end position="120"/>
    </location>
</feature>
<feature type="transmembrane region" description="Helical" evidence="1">
    <location>
        <begin position="127"/>
        <end position="147"/>
    </location>
</feature>
<feature type="transmembrane region" description="Helical" evidence="1">
    <location>
        <begin position="158"/>
        <end position="178"/>
    </location>
</feature>
<feature type="transmembrane region" description="Helical" evidence="1">
    <location>
        <begin position="203"/>
        <end position="223"/>
    </location>
</feature>
<feature type="transmembrane region" description="Helical" evidence="1">
    <location>
        <begin position="241"/>
        <end position="261"/>
    </location>
</feature>
<feature type="transmembrane region" description="Helical" evidence="1">
    <location>
        <begin position="286"/>
        <end position="306"/>
    </location>
</feature>
<feature type="transmembrane region" description="Helical" evidence="1">
    <location>
        <begin position="344"/>
        <end position="364"/>
    </location>
</feature>
<feature type="transmembrane region" description="Helical" evidence="1">
    <location>
        <begin position="380"/>
        <end position="400"/>
    </location>
</feature>
<feature type="transmembrane region" description="Helical" evidence="1">
    <location>
        <begin position="419"/>
        <end position="439"/>
    </location>
</feature>
<feature type="transmembrane region" description="Helical" evidence="1">
    <location>
        <begin position="449"/>
        <end position="469"/>
    </location>
</feature>
<feature type="sequence conflict" description="In Ref. 2; AAD10570." evidence="2" ref="2">
    <original>IFKKA</original>
    <variation>TLEDI</variation>
    <location>
        <begin position="282"/>
        <end position="286"/>
    </location>
</feature>
<sequence length="489" mass="54766">MGQINRKFSEKQFLLFVVNYIAGFGFIATAISLFRLGPFSWLIFLLVSLVSLIVTLSFARLSSIDSQNYGGPYLWAKKAVDKEKIAGRMFSFFTGWNNFIIGPLSAATAPLFILNSFSGIDGIRGNLVNTWILIAIGFSFYVLLAFISTKGTSLNKKLIALFASVKWIVILSALIVAIYVIARDGNGYSQNNNLESGFFGRREISFAQIATVFITFFYSYAGVEDISVMTPDVKTNNFRKILIVSFIAVFLFYFIGIIILNGLQNIAQRGGEANSIGNVADIFKKAAGLGTLIFYGVGALFNNVSTRLSTIIANSRKILPLAYDNYLPSFFYKQNKKGEFQNAIWFTFGTTLIAMTLLVFIPLVASNFDFDNATEYAASVGSAATLLQYIFVFFIIFKFIYKKEPLYQKKWVKTTEELLFCLGTIVIVLMLLVYLFPVIDGFSKWETKHTLTIVLYGVLSLIGLVLFLLQEYKHKNKQNANKQTTQTTV</sequence>
<name>Y225_MYCGE</name>
<protein>
    <recommendedName>
        <fullName>Uncharacterized protein MG225</fullName>
    </recommendedName>
</protein>
<dbReference type="EMBL" id="L43967">
    <property type="protein sequence ID" value="AAC71446.1"/>
    <property type="molecule type" value="Genomic_DNA"/>
</dbReference>
<dbReference type="EMBL" id="U01756">
    <property type="protein sequence ID" value="AAD10570.1"/>
    <property type="molecule type" value="Genomic_DNA"/>
</dbReference>
<dbReference type="PIR" id="H64224">
    <property type="entry name" value="H64224"/>
</dbReference>
<dbReference type="RefSeq" id="WP_010869383.1">
    <property type="nucleotide sequence ID" value="NC_000908.2"/>
</dbReference>
<dbReference type="SMR" id="P47467"/>
<dbReference type="FunCoup" id="P47467">
    <property type="interactions" value="105"/>
</dbReference>
<dbReference type="STRING" id="243273.MG_225"/>
<dbReference type="TCDB" id="2.A.3.3.15">
    <property type="family name" value="the amino acid-polyamine-organocation (apc) family"/>
</dbReference>
<dbReference type="GeneID" id="88282370"/>
<dbReference type="KEGG" id="mge:MG_225"/>
<dbReference type="eggNOG" id="COG0531">
    <property type="taxonomic scope" value="Bacteria"/>
</dbReference>
<dbReference type="HOGENOM" id="CLU_601059_0_0_14"/>
<dbReference type="InParanoid" id="P47467"/>
<dbReference type="OrthoDB" id="396415at2"/>
<dbReference type="BioCyc" id="MGEN243273:G1GJ2-271-MONOMER"/>
<dbReference type="Proteomes" id="UP000000807">
    <property type="component" value="Chromosome"/>
</dbReference>
<dbReference type="GO" id="GO:0005886">
    <property type="term" value="C:plasma membrane"/>
    <property type="evidence" value="ECO:0007669"/>
    <property type="project" value="UniProtKB-SubCell"/>
</dbReference>
<dbReference type="GO" id="GO:0022857">
    <property type="term" value="F:transmembrane transporter activity"/>
    <property type="evidence" value="ECO:0007669"/>
    <property type="project" value="InterPro"/>
</dbReference>
<dbReference type="Gene3D" id="1.20.1740.10">
    <property type="entry name" value="Amino acid/polyamine transporter I"/>
    <property type="match status" value="1"/>
</dbReference>
<dbReference type="InterPro" id="IPR002293">
    <property type="entry name" value="AA/rel_permease1"/>
</dbReference>
<dbReference type="InterPro" id="IPR050367">
    <property type="entry name" value="APC_superfamily"/>
</dbReference>
<dbReference type="PANTHER" id="PTHR42770">
    <property type="entry name" value="AMINO ACID TRANSPORTER-RELATED"/>
    <property type="match status" value="1"/>
</dbReference>
<dbReference type="PANTHER" id="PTHR42770:SF18">
    <property type="entry name" value="ARGININE_AGMATINE ANTIPORTER"/>
    <property type="match status" value="1"/>
</dbReference>
<dbReference type="Pfam" id="PF13520">
    <property type="entry name" value="AA_permease_2"/>
    <property type="match status" value="1"/>
</dbReference>
<dbReference type="PIRSF" id="PIRSF006060">
    <property type="entry name" value="AA_transporter"/>
    <property type="match status" value="1"/>
</dbReference>
<keyword id="KW-1003">Cell membrane</keyword>
<keyword id="KW-0472">Membrane</keyword>
<keyword id="KW-1185">Reference proteome</keyword>
<keyword id="KW-0812">Transmembrane</keyword>
<keyword id="KW-1133">Transmembrane helix</keyword>